<reference key="1">
    <citation type="journal article" date="2007" name="Plant Cell">
        <title>Dothideomycete-plant interactions illuminated by genome sequencing and EST analysis of the wheat pathogen Stagonospora nodorum.</title>
        <authorList>
            <person name="Hane J.K."/>
            <person name="Lowe R.G.T."/>
            <person name="Solomon P.S."/>
            <person name="Tan K.-C."/>
            <person name="Schoch C.L."/>
            <person name="Spatafora J.W."/>
            <person name="Crous P.W."/>
            <person name="Kodira C.D."/>
            <person name="Birren B.W."/>
            <person name="Galagan J.E."/>
            <person name="Torriani S.F.F."/>
            <person name="McDonald B.A."/>
            <person name="Oliver R.P."/>
        </authorList>
    </citation>
    <scope>NUCLEOTIDE SEQUENCE [LARGE SCALE GENOMIC DNA]</scope>
    <source>
        <strain>SN15 / ATCC MYA-4574 / FGSC 10173</strain>
    </source>
</reference>
<protein>
    <recommendedName>
        <fullName>U3 small nucleolar RNA-associated protein 10</fullName>
    </recommendedName>
</protein>
<name>UTP10_PHANO</name>
<feature type="chain" id="PRO_0000308510" description="U3 small nucleolar RNA-associated protein 10">
    <location>
        <begin position="1"/>
        <end position="1712"/>
    </location>
</feature>
<feature type="repeat" description="HEAT 1" evidence="2">
    <location>
        <begin position="164"/>
        <end position="202"/>
    </location>
</feature>
<feature type="repeat" description="HEAT 2" evidence="2">
    <location>
        <begin position="490"/>
        <end position="528"/>
    </location>
</feature>
<feature type="repeat" description="HEAT 3" evidence="2">
    <location>
        <begin position="564"/>
        <end position="605"/>
    </location>
</feature>
<feature type="repeat" description="HEAT 4" evidence="2">
    <location>
        <begin position="987"/>
        <end position="1025"/>
    </location>
</feature>
<feature type="repeat" description="HEAT 5" evidence="2">
    <location>
        <begin position="1236"/>
        <end position="1275"/>
    </location>
</feature>
<feature type="repeat" description="HEAT 6" evidence="2">
    <location>
        <begin position="1605"/>
        <end position="1646"/>
    </location>
</feature>
<feature type="repeat" description="HEAT 7" evidence="2">
    <location>
        <begin position="1667"/>
        <end position="1705"/>
    </location>
</feature>
<accession>Q0V1B1</accession>
<proteinExistence type="inferred from homology"/>
<evidence type="ECO:0000250" key="1">
    <source>
        <dbReference type="UniProtKB" id="P42945"/>
    </source>
</evidence>
<evidence type="ECO:0000255" key="2"/>
<evidence type="ECO:0000305" key="3"/>
<keyword id="KW-0539">Nucleus</keyword>
<keyword id="KW-0677">Repeat</keyword>
<keyword id="KW-0687">Ribonucleoprotein</keyword>
<keyword id="KW-0690">Ribosome biogenesis</keyword>
<keyword id="KW-0698">rRNA processing</keyword>
<comment type="function">
    <text evidence="1">Involved in nucleolar processing of pre-18S ribosomal RNA. Involved in ribosome biosynthesis (By similarity).</text>
</comment>
<comment type="subunit">
    <text evidence="1">Component of the ribosomal small subunit (SSU) processome.</text>
</comment>
<comment type="subcellular location">
    <subcellularLocation>
        <location evidence="1">Nucleus</location>
        <location evidence="1">Nucleolus</location>
    </subcellularLocation>
</comment>
<comment type="similarity">
    <text evidence="3">Belongs to the HEATR1/UTP10 family.</text>
</comment>
<dbReference type="EMBL" id="CH445327">
    <property type="protein sequence ID" value="EAT90415.2"/>
    <property type="molecule type" value="Genomic_DNA"/>
</dbReference>
<dbReference type="RefSeq" id="XP_001792819.1">
    <property type="nucleotide sequence ID" value="XM_001792767.1"/>
</dbReference>
<dbReference type="SMR" id="Q0V1B1"/>
<dbReference type="FunCoup" id="Q0V1B1">
    <property type="interactions" value="1022"/>
</dbReference>
<dbReference type="STRING" id="321614.Q0V1B1"/>
<dbReference type="EnsemblFungi" id="SNOT_02203">
    <property type="protein sequence ID" value="SNOT_02203"/>
    <property type="gene ID" value="SNOG_02203"/>
</dbReference>
<dbReference type="GeneID" id="5969669"/>
<dbReference type="KEGG" id="pno:SNOG_02203"/>
<dbReference type="VEuPathDB" id="FungiDB:JI435_022030"/>
<dbReference type="eggNOG" id="KOG1837">
    <property type="taxonomic scope" value="Eukaryota"/>
</dbReference>
<dbReference type="HOGENOM" id="CLU_001128_3_1_1"/>
<dbReference type="InParanoid" id="Q0V1B1"/>
<dbReference type="Proteomes" id="UP000001055">
    <property type="component" value="Unassembled WGS sequence"/>
</dbReference>
<dbReference type="GO" id="GO:0030686">
    <property type="term" value="C:90S preribosome"/>
    <property type="evidence" value="ECO:0000318"/>
    <property type="project" value="GO_Central"/>
</dbReference>
<dbReference type="GO" id="GO:0032040">
    <property type="term" value="C:small-subunit processome"/>
    <property type="evidence" value="ECO:0000318"/>
    <property type="project" value="GO_Central"/>
</dbReference>
<dbReference type="GO" id="GO:0034455">
    <property type="term" value="C:t-UTP complex"/>
    <property type="evidence" value="ECO:0000318"/>
    <property type="project" value="GO_Central"/>
</dbReference>
<dbReference type="GO" id="GO:0030515">
    <property type="term" value="F:snoRNA binding"/>
    <property type="evidence" value="ECO:0000318"/>
    <property type="project" value="GO_Central"/>
</dbReference>
<dbReference type="GO" id="GO:0000462">
    <property type="term" value="P:maturation of SSU-rRNA from tricistronic rRNA transcript (SSU-rRNA, 5.8S rRNA, LSU-rRNA)"/>
    <property type="evidence" value="ECO:0000318"/>
    <property type="project" value="GO_Central"/>
</dbReference>
<dbReference type="GO" id="GO:0045943">
    <property type="term" value="P:positive regulation of transcription by RNA polymerase I"/>
    <property type="evidence" value="ECO:0000318"/>
    <property type="project" value="GO_Central"/>
</dbReference>
<dbReference type="FunFam" id="1.25.10.10:FF:001993">
    <property type="entry name" value="U3 small nucleolar RNA-associated protein 10"/>
    <property type="match status" value="1"/>
</dbReference>
<dbReference type="Gene3D" id="1.25.10.10">
    <property type="entry name" value="Leucine-rich Repeat Variant"/>
    <property type="match status" value="3"/>
</dbReference>
<dbReference type="InterPro" id="IPR011989">
    <property type="entry name" value="ARM-like"/>
</dbReference>
<dbReference type="InterPro" id="IPR016024">
    <property type="entry name" value="ARM-type_fold"/>
</dbReference>
<dbReference type="InterPro" id="IPR012954">
    <property type="entry name" value="BP28_C_dom"/>
</dbReference>
<dbReference type="InterPro" id="IPR021133">
    <property type="entry name" value="HEAT_type_2"/>
</dbReference>
<dbReference type="InterPro" id="IPR056473">
    <property type="entry name" value="HEAT_Utp10/HEAT1"/>
</dbReference>
<dbReference type="InterPro" id="IPR022125">
    <property type="entry name" value="U3snoRNP10_N"/>
</dbReference>
<dbReference type="InterPro" id="IPR040191">
    <property type="entry name" value="UTP10"/>
</dbReference>
<dbReference type="PANTHER" id="PTHR13457">
    <property type="entry name" value="BAP28"/>
    <property type="match status" value="1"/>
</dbReference>
<dbReference type="PANTHER" id="PTHR13457:SF1">
    <property type="entry name" value="HEAT REPEAT-CONTAINING PROTEIN 1"/>
    <property type="match status" value="1"/>
</dbReference>
<dbReference type="Pfam" id="PF08146">
    <property type="entry name" value="BP28CT"/>
    <property type="match status" value="1"/>
</dbReference>
<dbReference type="Pfam" id="PF23243">
    <property type="entry name" value="HEAT_HEATR1"/>
    <property type="match status" value="1"/>
</dbReference>
<dbReference type="Pfam" id="PF12397">
    <property type="entry name" value="U3snoRNP10"/>
    <property type="match status" value="1"/>
</dbReference>
<dbReference type="SUPFAM" id="SSF48371">
    <property type="entry name" value="ARM repeat"/>
    <property type="match status" value="2"/>
</dbReference>
<dbReference type="PROSITE" id="PS50077">
    <property type="entry name" value="HEAT_REPEAT"/>
    <property type="match status" value="1"/>
</dbReference>
<sequence length="1712" mass="188247">MATALQKQLAAIAASSTHQLDLKAQKSAHGKSLLFEPKIAASQSFETVYLICYEGFRDLCALDSRFLQFSKSLFSEQSKVEDRTQMTKEENKKLNAVVEAFITLVVNTPGFFNALQAHTVRVVKAGHQAPQMISFWSTITLEAVFGILENTSSGRRDIQSQKTEELVLRILPVLNSCMQAKYGAETVAACYSIVTVLAGRGELGEKVLDGLMEAVVLAHEADSLNACLQCLAVLAEQRSPAQLPPRVIRRLLKVPQLSQKLVQISKQCRVHRLTLGCALGALASIDRLEEQRDVFQELMASGLLTEAYTRAALAALVTSIRDSAPGSTEHGQLLDLAAQLAETTYFLDGMRAAAKSDNVDLESLGLTLAPALETAQIDNDEDEDMLDVDDVSSQAIAAPKVEVPDFAVQSFLELDASQSFAEVANAFERAVSTHQSSPFLASKSLGKENAMHSNLYLSLLARIWCSSQLPAARIAALRAAAATLKSAEDTCDFQNLIPYLLHALADPSAPVRRAAAACTVALSEASGSQANTSTWGSSKLYGSSGKAQKHVSQVVQLKSEDVSTLLSSILIPMLEESVMDPTFAIPAIREVLEGSKGSKSQPKHGMNAQTRTYYRLSFFASHLSLSPLVRIRIILFPIFNFSGKVSDTVRSNTILPLIQGWCTLPLAEASKVCDVEKVTLEDAYRGHLNALVAREAKSVQLLNELMIESLDSSKRLLAEAVFDKVAAVWPATKSEQRVTLARTLLDMSFKEGKDDGEKQCRERAIEILRNVKHDSATLLTFLESVPAAVQMPEGPPTKKRRRTSRNEMARVELASQDDVQRFVAKADFGFFELIEGSNPGQPSQPFSRVYSLSSTTWQPLKQQSGSELVYVQSMILGSLTPIVDTLKVSDLVVHGFMHANTVQQQKDTADYQSSVRADLLIDCIRHSTSPQVQNSALLLIANLASWVPELILHNLMPIFTFIGSTLLRQQDDYSAQVVDKVWCYHFTQTISRVVPQLAASLRAKHKNFLTGVSDLLLSFTAAFEHIPLHRRLKLFSELARTLGPQDSLSAIISLLADRYHNGKTQRRFSTELLLVFDPIHTLDAIKGYLDLVVDAAGPKRKVSDSLFGLNDKTAAQVETAIKNLLVSLADLATDDRLRAHVTRAFRRKDDPARPREVFANIVETTIQLSKKVASSPKLYEACSRVLANCLDLLPTTDLVKSAELLLVNTDHQVQIAAIKAVELRAGNAVQNDKKSVISLISFLPSVEKVLQQSQHTDAKIISVGCIDRIVERFGKKDMTAVASIAQTIAGSQALSSGNDTIRVLSLLCLTSIVDVLEDEAIALLPTVLPTAFDYLSQAIEGEKNGLHNAVYSLLSNIVERLGYMFSRDYLETALRLSHRSAVGGLEDTCDESRRTFYQNVSEHLGAQETFAAIKTTWPHALSQGFEASSEHLELLRSTVDLQSKSKLIKASSTLSEQAIDSQEEQEYDDEEMNQLDNTLMSRTCHGSEAQRCPPSGPFFVQLVDQEGPMSAKPEYAVTFYKFLAAFFDKFKSDCSRATQATSSTTQPKMLEHVAQEDADSELRSAVLGALQKSFQHDQDAFWQAPSHFGTILKPLVNLLTISATEEVTEVVIPTITDLAASSSSSIDNHRELNTILLRYMRSDSAATRLATVKCEQSLTTRLGEEWLGLLPEMLPFISELREDDDEMVERETQRWISQVEGVLGESLEGMLQ</sequence>
<organism>
    <name type="scientific">Phaeosphaeria nodorum (strain SN15 / ATCC MYA-4574 / FGSC 10173)</name>
    <name type="common">Glume blotch fungus</name>
    <name type="synonym">Parastagonospora nodorum</name>
    <dbReference type="NCBI Taxonomy" id="321614"/>
    <lineage>
        <taxon>Eukaryota</taxon>
        <taxon>Fungi</taxon>
        <taxon>Dikarya</taxon>
        <taxon>Ascomycota</taxon>
        <taxon>Pezizomycotina</taxon>
        <taxon>Dothideomycetes</taxon>
        <taxon>Pleosporomycetidae</taxon>
        <taxon>Pleosporales</taxon>
        <taxon>Pleosporineae</taxon>
        <taxon>Phaeosphaeriaceae</taxon>
        <taxon>Parastagonospora</taxon>
    </lineage>
</organism>
<gene>
    <name evidence="1" type="primary">UTP10</name>
    <name type="ORF">SNOG_02203</name>
</gene>